<accession>C3NFS8</accession>
<feature type="chain" id="PRO_1000212913" description="Large ribosomal subunit protein eL24">
    <location>
        <begin position="1"/>
        <end position="61"/>
    </location>
</feature>
<feature type="zinc finger region" description="C4-type" evidence="1">
    <location>
        <begin position="7"/>
        <end position="37"/>
    </location>
</feature>
<feature type="binding site" evidence="1">
    <location>
        <position position="7"/>
    </location>
    <ligand>
        <name>Zn(2+)</name>
        <dbReference type="ChEBI" id="CHEBI:29105"/>
    </ligand>
</feature>
<feature type="binding site" evidence="1">
    <location>
        <position position="10"/>
    </location>
    <ligand>
        <name>Zn(2+)</name>
        <dbReference type="ChEBI" id="CHEBI:29105"/>
    </ligand>
</feature>
<feature type="binding site" evidence="1">
    <location>
        <position position="33"/>
    </location>
    <ligand>
        <name>Zn(2+)</name>
        <dbReference type="ChEBI" id="CHEBI:29105"/>
    </ligand>
</feature>
<feature type="binding site" evidence="1">
    <location>
        <position position="37"/>
    </location>
    <ligand>
        <name>Zn(2+)</name>
        <dbReference type="ChEBI" id="CHEBI:29105"/>
    </ligand>
</feature>
<gene>
    <name evidence="1" type="primary">rpl24e</name>
    <name type="ordered locus">YN1551_0937</name>
</gene>
<name>RL24E_SACI1</name>
<sequence>MPTTRQCSFCGHEIPPGTGLMYVRNDGTILWFCSSKCRKSMLKYHRDPKKYKWTTRYMKVR</sequence>
<reference key="1">
    <citation type="journal article" date="2009" name="Proc. Natl. Acad. Sci. U.S.A.">
        <title>Biogeography of the Sulfolobus islandicus pan-genome.</title>
        <authorList>
            <person name="Reno M.L."/>
            <person name="Held N.L."/>
            <person name="Fields C.J."/>
            <person name="Burke P.V."/>
            <person name="Whitaker R.J."/>
        </authorList>
    </citation>
    <scope>NUCLEOTIDE SEQUENCE [LARGE SCALE GENOMIC DNA]</scope>
    <source>
        <strain>Y.N.15.51 / Yellowstone #2</strain>
    </source>
</reference>
<protein>
    <recommendedName>
        <fullName evidence="1">Large ribosomal subunit protein eL24</fullName>
    </recommendedName>
    <alternativeName>
        <fullName evidence="2">50S ribosomal protein L24e</fullName>
    </alternativeName>
</protein>
<proteinExistence type="inferred from homology"/>
<organism>
    <name type="scientific">Saccharolobus islandicus (strain Y.N.15.51 / Yellowstone #2)</name>
    <name type="common">Sulfolobus islandicus</name>
    <dbReference type="NCBI Taxonomy" id="419942"/>
    <lineage>
        <taxon>Archaea</taxon>
        <taxon>Thermoproteota</taxon>
        <taxon>Thermoprotei</taxon>
        <taxon>Sulfolobales</taxon>
        <taxon>Sulfolobaceae</taxon>
        <taxon>Saccharolobus</taxon>
    </lineage>
</organism>
<comment type="function">
    <text evidence="1">Binds to the 23S rRNA.</text>
</comment>
<comment type="cofactor">
    <cofactor evidence="1">
        <name>Zn(2+)</name>
        <dbReference type="ChEBI" id="CHEBI:29105"/>
    </cofactor>
    <text evidence="1">Binds 1 zinc ion per subunit.</text>
</comment>
<comment type="subunit">
    <text evidence="1">Part of the 50S ribosomal subunit. Forms a cluster with proteins L3 and L14.</text>
</comment>
<comment type="similarity">
    <text evidence="1">Belongs to the eukaryotic ribosomal protein eL24 family.</text>
</comment>
<dbReference type="EMBL" id="CP001404">
    <property type="protein sequence ID" value="ACP48046.1"/>
    <property type="molecule type" value="Genomic_DNA"/>
</dbReference>
<dbReference type="RefSeq" id="WP_009990483.1">
    <property type="nucleotide sequence ID" value="NC_012623.1"/>
</dbReference>
<dbReference type="SMR" id="C3NFS8"/>
<dbReference type="KEGG" id="sin:YN1551_0937"/>
<dbReference type="HOGENOM" id="CLU_190191_0_0_2"/>
<dbReference type="Proteomes" id="UP000006818">
    <property type="component" value="Chromosome"/>
</dbReference>
<dbReference type="GO" id="GO:1990904">
    <property type="term" value="C:ribonucleoprotein complex"/>
    <property type="evidence" value="ECO:0007669"/>
    <property type="project" value="UniProtKB-KW"/>
</dbReference>
<dbReference type="GO" id="GO:0005840">
    <property type="term" value="C:ribosome"/>
    <property type="evidence" value="ECO:0007669"/>
    <property type="project" value="UniProtKB-KW"/>
</dbReference>
<dbReference type="GO" id="GO:0019843">
    <property type="term" value="F:rRNA binding"/>
    <property type="evidence" value="ECO:0007669"/>
    <property type="project" value="UniProtKB-UniRule"/>
</dbReference>
<dbReference type="GO" id="GO:0003735">
    <property type="term" value="F:structural constituent of ribosome"/>
    <property type="evidence" value="ECO:0007669"/>
    <property type="project" value="InterPro"/>
</dbReference>
<dbReference type="GO" id="GO:0008270">
    <property type="term" value="F:zinc ion binding"/>
    <property type="evidence" value="ECO:0007669"/>
    <property type="project" value="UniProtKB-UniRule"/>
</dbReference>
<dbReference type="GO" id="GO:0006412">
    <property type="term" value="P:translation"/>
    <property type="evidence" value="ECO:0007669"/>
    <property type="project" value="UniProtKB-UniRule"/>
</dbReference>
<dbReference type="CDD" id="cd00472">
    <property type="entry name" value="Ribosomal_L24e_L24"/>
    <property type="match status" value="1"/>
</dbReference>
<dbReference type="FunFam" id="2.30.170.20:FF:000001">
    <property type="entry name" value="probable ribosome biogenesis protein RLP24"/>
    <property type="match status" value="1"/>
</dbReference>
<dbReference type="Gene3D" id="2.30.170.20">
    <property type="entry name" value="Ribosomal protein L24e"/>
    <property type="match status" value="1"/>
</dbReference>
<dbReference type="HAMAP" id="MF_00773">
    <property type="entry name" value="Ribosomal_eL24"/>
    <property type="match status" value="1"/>
</dbReference>
<dbReference type="InterPro" id="IPR038630">
    <property type="entry name" value="L24e/L24_sf"/>
</dbReference>
<dbReference type="InterPro" id="IPR056366">
    <property type="entry name" value="Ribosomal_eL24"/>
</dbReference>
<dbReference type="InterPro" id="IPR055345">
    <property type="entry name" value="Ribosomal_eL24-rel_arc"/>
</dbReference>
<dbReference type="InterPro" id="IPR000988">
    <property type="entry name" value="Ribosomal_eL24-rel_N"/>
</dbReference>
<dbReference type="InterPro" id="IPR023442">
    <property type="entry name" value="Ribosomal_eL24_CS"/>
</dbReference>
<dbReference type="InterPro" id="IPR011017">
    <property type="entry name" value="TRASH_dom"/>
</dbReference>
<dbReference type="NCBIfam" id="NF034186">
    <property type="entry name" value="PRK14891.1-1"/>
    <property type="match status" value="1"/>
</dbReference>
<dbReference type="PANTHER" id="PTHR10792">
    <property type="entry name" value="60S RIBOSOMAL PROTEIN L24"/>
    <property type="match status" value="1"/>
</dbReference>
<dbReference type="PANTHER" id="PTHR10792:SF1">
    <property type="entry name" value="RIBOSOMAL PROTEIN L24"/>
    <property type="match status" value="1"/>
</dbReference>
<dbReference type="Pfam" id="PF01246">
    <property type="entry name" value="Ribosomal_L24e"/>
    <property type="match status" value="1"/>
</dbReference>
<dbReference type="SMART" id="SM00746">
    <property type="entry name" value="TRASH"/>
    <property type="match status" value="1"/>
</dbReference>
<dbReference type="SUPFAM" id="SSF57716">
    <property type="entry name" value="Glucocorticoid receptor-like (DNA-binding domain)"/>
    <property type="match status" value="1"/>
</dbReference>
<dbReference type="PROSITE" id="PS01073">
    <property type="entry name" value="RIBOSOMAL_L24E"/>
    <property type="match status" value="1"/>
</dbReference>
<evidence type="ECO:0000255" key="1">
    <source>
        <dbReference type="HAMAP-Rule" id="MF_00773"/>
    </source>
</evidence>
<evidence type="ECO:0000305" key="2"/>
<keyword id="KW-0479">Metal-binding</keyword>
<keyword id="KW-0687">Ribonucleoprotein</keyword>
<keyword id="KW-0689">Ribosomal protein</keyword>
<keyword id="KW-0694">RNA-binding</keyword>
<keyword id="KW-0699">rRNA-binding</keyword>
<keyword id="KW-0862">Zinc</keyword>
<keyword id="KW-0863">Zinc-finger</keyword>